<comment type="function">
    <text evidence="1">This protein binds to 23S rRNA in the presence of protein L20.</text>
</comment>
<comment type="subunit">
    <text evidence="1">Part of the 50S ribosomal subunit. Contacts protein L20.</text>
</comment>
<comment type="similarity">
    <text evidence="1">Belongs to the bacterial ribosomal protein bL21 family.</text>
</comment>
<organism>
    <name type="scientific">Blochmanniella floridana</name>
    <dbReference type="NCBI Taxonomy" id="203907"/>
    <lineage>
        <taxon>Bacteria</taxon>
        <taxon>Pseudomonadati</taxon>
        <taxon>Pseudomonadota</taxon>
        <taxon>Gammaproteobacteria</taxon>
        <taxon>Enterobacterales</taxon>
        <taxon>Enterobacteriaceae</taxon>
        <taxon>ant endosymbionts</taxon>
        <taxon>Candidatus Blochmanniella</taxon>
    </lineage>
</organism>
<proteinExistence type="inferred from homology"/>
<sequence length="127" mass="14871">MYAVFQIGSKQYYVRTGQVIFIDRVKLDIGNQIEFNQVLLIRDMKNIYIGNPFIQNGKIIADILDHSLGKKIRIVKFRRRKHFRKFQGHRQCMTKIKVVKINSNNSDIECYKSVDIETKIGEEVHGA</sequence>
<dbReference type="EMBL" id="BX248583">
    <property type="protein sequence ID" value="CAD83616.1"/>
    <property type="molecule type" value="Genomic_DNA"/>
</dbReference>
<dbReference type="SMR" id="Q7VQN2"/>
<dbReference type="STRING" id="203907.Bfl093"/>
<dbReference type="KEGG" id="bfl:Bfl093"/>
<dbReference type="eggNOG" id="COG0261">
    <property type="taxonomic scope" value="Bacteria"/>
</dbReference>
<dbReference type="HOGENOM" id="CLU_061463_3_3_6"/>
<dbReference type="OrthoDB" id="9813334at2"/>
<dbReference type="Proteomes" id="UP000002192">
    <property type="component" value="Chromosome"/>
</dbReference>
<dbReference type="GO" id="GO:0005737">
    <property type="term" value="C:cytoplasm"/>
    <property type="evidence" value="ECO:0007669"/>
    <property type="project" value="UniProtKB-ARBA"/>
</dbReference>
<dbReference type="GO" id="GO:1990904">
    <property type="term" value="C:ribonucleoprotein complex"/>
    <property type="evidence" value="ECO:0007669"/>
    <property type="project" value="UniProtKB-KW"/>
</dbReference>
<dbReference type="GO" id="GO:0005840">
    <property type="term" value="C:ribosome"/>
    <property type="evidence" value="ECO:0007669"/>
    <property type="project" value="UniProtKB-KW"/>
</dbReference>
<dbReference type="GO" id="GO:0019843">
    <property type="term" value="F:rRNA binding"/>
    <property type="evidence" value="ECO:0007669"/>
    <property type="project" value="UniProtKB-UniRule"/>
</dbReference>
<dbReference type="GO" id="GO:0003735">
    <property type="term" value="F:structural constituent of ribosome"/>
    <property type="evidence" value="ECO:0007669"/>
    <property type="project" value="InterPro"/>
</dbReference>
<dbReference type="GO" id="GO:0006412">
    <property type="term" value="P:translation"/>
    <property type="evidence" value="ECO:0007669"/>
    <property type="project" value="UniProtKB-UniRule"/>
</dbReference>
<dbReference type="HAMAP" id="MF_01363">
    <property type="entry name" value="Ribosomal_bL21"/>
    <property type="match status" value="1"/>
</dbReference>
<dbReference type="InterPro" id="IPR028909">
    <property type="entry name" value="bL21-like"/>
</dbReference>
<dbReference type="InterPro" id="IPR036164">
    <property type="entry name" value="bL21-like_sf"/>
</dbReference>
<dbReference type="InterPro" id="IPR001787">
    <property type="entry name" value="Ribosomal_bL21"/>
</dbReference>
<dbReference type="InterPro" id="IPR018258">
    <property type="entry name" value="Ribosomal_bL21_CS"/>
</dbReference>
<dbReference type="NCBIfam" id="TIGR00061">
    <property type="entry name" value="L21"/>
    <property type="match status" value="1"/>
</dbReference>
<dbReference type="PANTHER" id="PTHR21349">
    <property type="entry name" value="50S RIBOSOMAL PROTEIN L21"/>
    <property type="match status" value="1"/>
</dbReference>
<dbReference type="PANTHER" id="PTHR21349:SF0">
    <property type="entry name" value="LARGE RIBOSOMAL SUBUNIT PROTEIN BL21M"/>
    <property type="match status" value="1"/>
</dbReference>
<dbReference type="Pfam" id="PF00829">
    <property type="entry name" value="Ribosomal_L21p"/>
    <property type="match status" value="1"/>
</dbReference>
<dbReference type="SUPFAM" id="SSF141091">
    <property type="entry name" value="L21p-like"/>
    <property type="match status" value="1"/>
</dbReference>
<dbReference type="PROSITE" id="PS01169">
    <property type="entry name" value="RIBOSOMAL_L21"/>
    <property type="match status" value="1"/>
</dbReference>
<protein>
    <recommendedName>
        <fullName evidence="1">Large ribosomal subunit protein bL21</fullName>
    </recommendedName>
    <alternativeName>
        <fullName evidence="2">50S ribosomal protein L21</fullName>
    </alternativeName>
</protein>
<name>RL21_BLOFL</name>
<evidence type="ECO:0000255" key="1">
    <source>
        <dbReference type="HAMAP-Rule" id="MF_01363"/>
    </source>
</evidence>
<evidence type="ECO:0000305" key="2"/>
<accession>Q7VQN2</accession>
<keyword id="KW-1185">Reference proteome</keyword>
<keyword id="KW-0687">Ribonucleoprotein</keyword>
<keyword id="KW-0689">Ribosomal protein</keyword>
<keyword id="KW-0694">RNA-binding</keyword>
<keyword id="KW-0699">rRNA-binding</keyword>
<gene>
    <name evidence="1" type="primary">rplU</name>
    <name type="ordered locus">Bfl093</name>
</gene>
<feature type="chain" id="PRO_0000270641" description="Large ribosomal subunit protein bL21">
    <location>
        <begin position="1"/>
        <end position="127"/>
    </location>
</feature>
<reference key="1">
    <citation type="journal article" date="2003" name="Proc. Natl. Acad. Sci. U.S.A.">
        <title>The genome sequence of Blochmannia floridanus: comparative analysis of reduced genomes.</title>
        <authorList>
            <person name="Gil R."/>
            <person name="Silva F.J."/>
            <person name="Zientz E."/>
            <person name="Delmotte F."/>
            <person name="Gonzalez-Candelas F."/>
            <person name="Latorre A."/>
            <person name="Rausell C."/>
            <person name="Kamerbeek J."/>
            <person name="Gadau J."/>
            <person name="Hoelldobler B."/>
            <person name="van Ham R.C.H.J."/>
            <person name="Gross R."/>
            <person name="Moya A."/>
        </authorList>
    </citation>
    <scope>NUCLEOTIDE SEQUENCE [LARGE SCALE GENOMIC DNA]</scope>
</reference>